<accession>Q7WI07</accession>
<comment type="function">
    <text evidence="1">Oxidative deamination of D-amino acids.</text>
</comment>
<comment type="catalytic activity">
    <reaction evidence="1">
        <text>a D-alpha-amino acid + A + H2O = a 2-oxocarboxylate + AH2 + NH4(+)</text>
        <dbReference type="Rhea" id="RHEA:18125"/>
        <dbReference type="ChEBI" id="CHEBI:13193"/>
        <dbReference type="ChEBI" id="CHEBI:15377"/>
        <dbReference type="ChEBI" id="CHEBI:17499"/>
        <dbReference type="ChEBI" id="CHEBI:28938"/>
        <dbReference type="ChEBI" id="CHEBI:35179"/>
        <dbReference type="ChEBI" id="CHEBI:59871"/>
    </reaction>
</comment>
<comment type="cofactor">
    <cofactor evidence="1">
        <name>FAD</name>
        <dbReference type="ChEBI" id="CHEBI:57692"/>
    </cofactor>
</comment>
<comment type="similarity">
    <text evidence="1">Belongs to the DadA oxidoreductase family.</text>
</comment>
<protein>
    <recommendedName>
        <fullName evidence="1">D-amino acid dehydrogenase</fullName>
        <ecNumber evidence="1">1.4.99.-</ecNumber>
    </recommendedName>
</protein>
<sequence>MHVIVLGSGVIGTTTAYYLARQGAQVTVLERRAGPADETSYGNAGQVSPGYSTPWAAPGIPLKALKWMFQKHAPLAIRADGSFYQWRWLAAMLANCSAGRYSVNKERMLRLAEYSRDCLRTLRADTGIQYEQRTQGTLQLFRTAAQMEAARRDIAVLEECGVPYELLDRNRLPTAEPALARALDKLAGGLRLPNDETGDCRRFTLQLADKAKALGVQFRFNQQVEGLDVRGGQVAGVRVGGEQLAADRYVAAFGSYTRGFLRPLGLDLPVYPVKGYSLTIPMTDESAAPVSTILDETYKVAVTRFDQRIRVGGMAELAGFDLRLKEARRKTLELVVNDLFPGSGAVEQAEFWTGLRPMTPDSTPIIGATKYGNLFLNTGHGTLGWTMACGSGQLVADQVCGRQPAIRADDLALSRYGAGGQAGGGVARAQHNAA</sequence>
<gene>
    <name evidence="1" type="primary">dadA</name>
    <name type="ordered locus">BB3049</name>
</gene>
<name>DADA_BORBR</name>
<feature type="chain" id="PRO_0000166125" description="D-amino acid dehydrogenase">
    <location>
        <begin position="1"/>
        <end position="434"/>
    </location>
</feature>
<feature type="binding site" evidence="1">
    <location>
        <begin position="3"/>
        <end position="17"/>
    </location>
    <ligand>
        <name>FAD</name>
        <dbReference type="ChEBI" id="CHEBI:57692"/>
    </ligand>
</feature>
<organism>
    <name type="scientific">Bordetella bronchiseptica (strain ATCC BAA-588 / NCTC 13252 / RB50)</name>
    <name type="common">Alcaligenes bronchisepticus</name>
    <dbReference type="NCBI Taxonomy" id="257310"/>
    <lineage>
        <taxon>Bacteria</taxon>
        <taxon>Pseudomonadati</taxon>
        <taxon>Pseudomonadota</taxon>
        <taxon>Betaproteobacteria</taxon>
        <taxon>Burkholderiales</taxon>
        <taxon>Alcaligenaceae</taxon>
        <taxon>Bordetella</taxon>
    </lineage>
</organism>
<dbReference type="EC" id="1.4.99.-" evidence="1"/>
<dbReference type="EMBL" id="BX640446">
    <property type="protein sequence ID" value="CAE33541.1"/>
    <property type="molecule type" value="Genomic_DNA"/>
</dbReference>
<dbReference type="RefSeq" id="WP_003810959.1">
    <property type="nucleotide sequence ID" value="NC_002927.3"/>
</dbReference>
<dbReference type="SMR" id="Q7WI07"/>
<dbReference type="KEGG" id="bbr:BB3049"/>
<dbReference type="eggNOG" id="COG0665">
    <property type="taxonomic scope" value="Bacteria"/>
</dbReference>
<dbReference type="HOGENOM" id="CLU_007884_9_2_4"/>
<dbReference type="Proteomes" id="UP000001027">
    <property type="component" value="Chromosome"/>
</dbReference>
<dbReference type="GO" id="GO:0005737">
    <property type="term" value="C:cytoplasm"/>
    <property type="evidence" value="ECO:0007669"/>
    <property type="project" value="TreeGrafter"/>
</dbReference>
<dbReference type="GO" id="GO:0005886">
    <property type="term" value="C:plasma membrane"/>
    <property type="evidence" value="ECO:0007669"/>
    <property type="project" value="TreeGrafter"/>
</dbReference>
<dbReference type="GO" id="GO:0008718">
    <property type="term" value="F:D-amino-acid dehydrogenase activity"/>
    <property type="evidence" value="ECO:0007669"/>
    <property type="project" value="UniProtKB-UniRule"/>
</dbReference>
<dbReference type="GO" id="GO:0055130">
    <property type="term" value="P:D-alanine catabolic process"/>
    <property type="evidence" value="ECO:0007669"/>
    <property type="project" value="TreeGrafter"/>
</dbReference>
<dbReference type="FunFam" id="3.50.50.60:FF:000020">
    <property type="entry name" value="D-amino acid dehydrogenase"/>
    <property type="match status" value="1"/>
</dbReference>
<dbReference type="Gene3D" id="3.30.9.10">
    <property type="entry name" value="D-Amino Acid Oxidase, subunit A, domain 2"/>
    <property type="match status" value="1"/>
</dbReference>
<dbReference type="Gene3D" id="3.50.50.60">
    <property type="entry name" value="FAD/NAD(P)-binding domain"/>
    <property type="match status" value="2"/>
</dbReference>
<dbReference type="HAMAP" id="MF_01202">
    <property type="entry name" value="DadA"/>
    <property type="match status" value="1"/>
</dbReference>
<dbReference type="InterPro" id="IPR023080">
    <property type="entry name" value="DadA"/>
</dbReference>
<dbReference type="InterPro" id="IPR006076">
    <property type="entry name" value="FAD-dep_OxRdtase"/>
</dbReference>
<dbReference type="InterPro" id="IPR036188">
    <property type="entry name" value="FAD/NAD-bd_sf"/>
</dbReference>
<dbReference type="NCBIfam" id="NF001933">
    <property type="entry name" value="PRK00711.1"/>
    <property type="match status" value="1"/>
</dbReference>
<dbReference type="PANTHER" id="PTHR13847:SF280">
    <property type="entry name" value="D-AMINO ACID DEHYDROGENASE"/>
    <property type="match status" value="1"/>
</dbReference>
<dbReference type="PANTHER" id="PTHR13847">
    <property type="entry name" value="SARCOSINE DEHYDROGENASE-RELATED"/>
    <property type="match status" value="1"/>
</dbReference>
<dbReference type="Pfam" id="PF01266">
    <property type="entry name" value="DAO"/>
    <property type="match status" value="1"/>
</dbReference>
<dbReference type="SUPFAM" id="SSF54373">
    <property type="entry name" value="FAD-linked reductases, C-terminal domain"/>
    <property type="match status" value="1"/>
</dbReference>
<dbReference type="SUPFAM" id="SSF51905">
    <property type="entry name" value="FAD/NAD(P)-binding domain"/>
    <property type="match status" value="1"/>
</dbReference>
<evidence type="ECO:0000255" key="1">
    <source>
        <dbReference type="HAMAP-Rule" id="MF_01202"/>
    </source>
</evidence>
<keyword id="KW-0274">FAD</keyword>
<keyword id="KW-0285">Flavoprotein</keyword>
<keyword id="KW-0560">Oxidoreductase</keyword>
<reference key="1">
    <citation type="journal article" date="2003" name="Nat. Genet.">
        <title>Comparative analysis of the genome sequences of Bordetella pertussis, Bordetella parapertussis and Bordetella bronchiseptica.</title>
        <authorList>
            <person name="Parkhill J."/>
            <person name="Sebaihia M."/>
            <person name="Preston A."/>
            <person name="Murphy L.D."/>
            <person name="Thomson N.R."/>
            <person name="Harris D.E."/>
            <person name="Holden M.T.G."/>
            <person name="Churcher C.M."/>
            <person name="Bentley S.D."/>
            <person name="Mungall K.L."/>
            <person name="Cerdeno-Tarraga A.-M."/>
            <person name="Temple L."/>
            <person name="James K.D."/>
            <person name="Harris B."/>
            <person name="Quail M.A."/>
            <person name="Achtman M."/>
            <person name="Atkin R."/>
            <person name="Baker S."/>
            <person name="Basham D."/>
            <person name="Bason N."/>
            <person name="Cherevach I."/>
            <person name="Chillingworth T."/>
            <person name="Collins M."/>
            <person name="Cronin A."/>
            <person name="Davis P."/>
            <person name="Doggett J."/>
            <person name="Feltwell T."/>
            <person name="Goble A."/>
            <person name="Hamlin N."/>
            <person name="Hauser H."/>
            <person name="Holroyd S."/>
            <person name="Jagels K."/>
            <person name="Leather S."/>
            <person name="Moule S."/>
            <person name="Norberczak H."/>
            <person name="O'Neil S."/>
            <person name="Ormond D."/>
            <person name="Price C."/>
            <person name="Rabbinowitsch E."/>
            <person name="Rutter S."/>
            <person name="Sanders M."/>
            <person name="Saunders D."/>
            <person name="Seeger K."/>
            <person name="Sharp S."/>
            <person name="Simmonds M."/>
            <person name="Skelton J."/>
            <person name="Squares R."/>
            <person name="Squares S."/>
            <person name="Stevens K."/>
            <person name="Unwin L."/>
            <person name="Whitehead S."/>
            <person name="Barrell B.G."/>
            <person name="Maskell D.J."/>
        </authorList>
    </citation>
    <scope>NUCLEOTIDE SEQUENCE [LARGE SCALE GENOMIC DNA]</scope>
    <source>
        <strain>ATCC BAA-588 / NCTC 13252 / RB50</strain>
    </source>
</reference>
<proteinExistence type="inferred from homology"/>